<organism>
    <name type="scientific">Dictyostelium discoideum</name>
    <name type="common">Social amoeba</name>
    <dbReference type="NCBI Taxonomy" id="44689"/>
    <lineage>
        <taxon>Eukaryota</taxon>
        <taxon>Amoebozoa</taxon>
        <taxon>Evosea</taxon>
        <taxon>Eumycetozoa</taxon>
        <taxon>Dictyostelia</taxon>
        <taxon>Dictyosteliales</taxon>
        <taxon>Dictyosteliaceae</taxon>
        <taxon>Dictyostelium</taxon>
    </lineage>
</organism>
<comment type="subunit">
    <text evidence="1">Probable component of the WASH complex.</text>
</comment>
<comment type="similarity">
    <text evidence="3">Belongs to the CCDC53 family.</text>
</comment>
<protein>
    <recommendedName>
        <fullName evidence="1">WASH complex subunit 3</fullName>
    </recommendedName>
</protein>
<name>WASC3_DICDI</name>
<feature type="chain" id="PRO_0000390959" description="WASH complex subunit 3">
    <location>
        <begin position="1"/>
        <end position="354"/>
    </location>
</feature>
<feature type="region of interest" description="Disordered" evidence="2">
    <location>
        <begin position="76"/>
        <end position="354"/>
    </location>
</feature>
<feature type="compositionally biased region" description="Pro residues" evidence="2">
    <location>
        <begin position="107"/>
        <end position="143"/>
    </location>
</feature>
<feature type="compositionally biased region" description="Acidic residues" evidence="2">
    <location>
        <begin position="150"/>
        <end position="159"/>
    </location>
</feature>
<feature type="compositionally biased region" description="Pro residues" evidence="2">
    <location>
        <begin position="213"/>
        <end position="244"/>
    </location>
</feature>
<feature type="compositionally biased region" description="Acidic residues" evidence="2">
    <location>
        <begin position="251"/>
        <end position="260"/>
    </location>
</feature>
<feature type="compositionally biased region" description="Low complexity" evidence="2">
    <location>
        <begin position="277"/>
        <end position="290"/>
    </location>
</feature>
<feature type="compositionally biased region" description="Acidic residues" evidence="2">
    <location>
        <begin position="293"/>
        <end position="307"/>
    </location>
</feature>
<feature type="compositionally biased region" description="Acidic residues" evidence="2">
    <location>
        <begin position="342"/>
        <end position="354"/>
    </location>
</feature>
<reference key="1">
    <citation type="journal article" date="2005" name="Nature">
        <title>The genome of the social amoeba Dictyostelium discoideum.</title>
        <authorList>
            <person name="Eichinger L."/>
            <person name="Pachebat J.A."/>
            <person name="Gloeckner G."/>
            <person name="Rajandream M.A."/>
            <person name="Sucgang R."/>
            <person name="Berriman M."/>
            <person name="Song J."/>
            <person name="Olsen R."/>
            <person name="Szafranski K."/>
            <person name="Xu Q."/>
            <person name="Tunggal B."/>
            <person name="Kummerfeld S."/>
            <person name="Madera M."/>
            <person name="Konfortov B.A."/>
            <person name="Rivero F."/>
            <person name="Bankier A.T."/>
            <person name="Lehmann R."/>
            <person name="Hamlin N."/>
            <person name="Davies R."/>
            <person name="Gaudet P."/>
            <person name="Fey P."/>
            <person name="Pilcher K."/>
            <person name="Chen G."/>
            <person name="Saunders D."/>
            <person name="Sodergren E.J."/>
            <person name="Davis P."/>
            <person name="Kerhornou A."/>
            <person name="Nie X."/>
            <person name="Hall N."/>
            <person name="Anjard C."/>
            <person name="Hemphill L."/>
            <person name="Bason N."/>
            <person name="Farbrother P."/>
            <person name="Desany B."/>
            <person name="Just E."/>
            <person name="Morio T."/>
            <person name="Rost R."/>
            <person name="Churcher C.M."/>
            <person name="Cooper J."/>
            <person name="Haydock S."/>
            <person name="van Driessche N."/>
            <person name="Cronin A."/>
            <person name="Goodhead I."/>
            <person name="Muzny D.M."/>
            <person name="Mourier T."/>
            <person name="Pain A."/>
            <person name="Lu M."/>
            <person name="Harper D."/>
            <person name="Lindsay R."/>
            <person name="Hauser H."/>
            <person name="James K.D."/>
            <person name="Quiles M."/>
            <person name="Madan Babu M."/>
            <person name="Saito T."/>
            <person name="Buchrieser C."/>
            <person name="Wardroper A."/>
            <person name="Felder M."/>
            <person name="Thangavelu M."/>
            <person name="Johnson D."/>
            <person name="Knights A."/>
            <person name="Loulseged H."/>
            <person name="Mungall K.L."/>
            <person name="Oliver K."/>
            <person name="Price C."/>
            <person name="Quail M.A."/>
            <person name="Urushihara H."/>
            <person name="Hernandez J."/>
            <person name="Rabbinowitsch E."/>
            <person name="Steffen D."/>
            <person name="Sanders M."/>
            <person name="Ma J."/>
            <person name="Kohara Y."/>
            <person name="Sharp S."/>
            <person name="Simmonds M.N."/>
            <person name="Spiegler S."/>
            <person name="Tivey A."/>
            <person name="Sugano S."/>
            <person name="White B."/>
            <person name="Walker D."/>
            <person name="Woodward J.R."/>
            <person name="Winckler T."/>
            <person name="Tanaka Y."/>
            <person name="Shaulsky G."/>
            <person name="Schleicher M."/>
            <person name="Weinstock G.M."/>
            <person name="Rosenthal A."/>
            <person name="Cox E.C."/>
            <person name="Chisholm R.L."/>
            <person name="Gibbs R.A."/>
            <person name="Loomis W.F."/>
            <person name="Platzer M."/>
            <person name="Kay R.R."/>
            <person name="Williams J.G."/>
            <person name="Dear P.H."/>
            <person name="Noegel A.A."/>
            <person name="Barrell B.G."/>
            <person name="Kuspa A."/>
        </authorList>
    </citation>
    <scope>NUCLEOTIDE SEQUENCE [LARGE SCALE GENOMIC DNA]</scope>
    <source>
        <strain>AX4</strain>
    </source>
</reference>
<sequence>MQVYVDYRDVNSISNKKTLAYVNNFVINTTQFLNRFNYLCEQKLCDISNHLQKLEITMSLLEIKLGSIDGLESLPSSANVPVHNTQPTTQQNTPPPPTAAATTSSNIPPPPPPPPPPMTGVPPPPPPPPPPPISKSNIPPPPATQQNTQESDDDDEDNNNNDKNNNNRDDEDDDDETSSQAPPPPPMPTLPSSQSLMDNLAAVLAMKKQQRNPQPPQPQPQSPSPQPPPPPTTTSSIPVPPPPFSGANNNSDDDDDDDEGPSLSIPAPPSMMVMSGNNNSNSNSYSNNNNNKDDDDDDDDDDDDDDNSISIPKPPQMDDIMIPAPPTDLFIPAPPSIRNYDDADDDDDDDDESW</sequence>
<gene>
    <name evidence="1" type="primary">washc3</name>
    <name type="ORF">DDB_G0267948</name>
</gene>
<evidence type="ECO:0000250" key="1">
    <source>
        <dbReference type="UniProtKB" id="Q9Y3C0"/>
    </source>
</evidence>
<evidence type="ECO:0000256" key="2">
    <source>
        <dbReference type="SAM" id="MobiDB-lite"/>
    </source>
</evidence>
<evidence type="ECO:0000305" key="3"/>
<accession>Q55FU3</accession>
<dbReference type="EMBL" id="AAFI02000003">
    <property type="protein sequence ID" value="EAL73427.1"/>
    <property type="molecule type" value="Genomic_DNA"/>
</dbReference>
<dbReference type="RefSeq" id="XP_647440.1">
    <property type="nucleotide sequence ID" value="XM_642348.1"/>
</dbReference>
<dbReference type="SMR" id="Q55FU3"/>
<dbReference type="FunCoup" id="Q55FU3">
    <property type="interactions" value="3"/>
</dbReference>
<dbReference type="STRING" id="44689.Q55FU3"/>
<dbReference type="GlyGen" id="Q55FU3">
    <property type="glycosylation" value="1 site"/>
</dbReference>
<dbReference type="PaxDb" id="44689-DDB0189669"/>
<dbReference type="EnsemblProtists" id="EAL73427">
    <property type="protein sequence ID" value="EAL73427"/>
    <property type="gene ID" value="DDB_G0267948"/>
</dbReference>
<dbReference type="GeneID" id="8616247"/>
<dbReference type="KEGG" id="ddi:DDB_G0267948"/>
<dbReference type="dictyBase" id="DDB_G0267948">
    <property type="gene designation" value="ccdc53"/>
</dbReference>
<dbReference type="VEuPathDB" id="AmoebaDB:DDB_G0267948"/>
<dbReference type="eggNOG" id="KOG4496">
    <property type="taxonomic scope" value="Eukaryota"/>
</dbReference>
<dbReference type="HOGENOM" id="CLU_783958_0_0_1"/>
<dbReference type="InParanoid" id="Q55FU3"/>
<dbReference type="OMA" id="AKYFTMR"/>
<dbReference type="PRO" id="PR:Q55FU3"/>
<dbReference type="Proteomes" id="UP000002195">
    <property type="component" value="Chromosome 1"/>
</dbReference>
<dbReference type="GO" id="GO:0061474">
    <property type="term" value="C:phagolysosome membrane"/>
    <property type="evidence" value="ECO:0000314"/>
    <property type="project" value="dictyBase"/>
</dbReference>
<dbReference type="GO" id="GO:0071203">
    <property type="term" value="C:WASH complex"/>
    <property type="evidence" value="ECO:0000314"/>
    <property type="project" value="dictyBase"/>
</dbReference>
<dbReference type="GO" id="GO:0030041">
    <property type="term" value="P:actin filament polymerization"/>
    <property type="evidence" value="ECO:0000315"/>
    <property type="project" value="dictyBase"/>
</dbReference>
<dbReference type="GO" id="GO:0006887">
    <property type="term" value="P:exocytosis"/>
    <property type="evidence" value="ECO:0000315"/>
    <property type="project" value="dictyBase"/>
</dbReference>
<dbReference type="GO" id="GO:0044655">
    <property type="term" value="P:phagosome reneutralization"/>
    <property type="evidence" value="ECO:0000315"/>
    <property type="project" value="dictyBase"/>
</dbReference>
<dbReference type="Gene3D" id="1.20.5.110">
    <property type="match status" value="1"/>
</dbReference>
<dbReference type="InterPro" id="IPR019309">
    <property type="entry name" value="WASHC3"/>
</dbReference>
<dbReference type="PANTHER" id="PTHR13015">
    <property type="entry name" value="PROTEIN AD-016-RELATED"/>
    <property type="match status" value="1"/>
</dbReference>
<dbReference type="PANTHER" id="PTHR13015:SF0">
    <property type="entry name" value="WASH COMPLEX SUBUNIT 3"/>
    <property type="match status" value="1"/>
</dbReference>
<dbReference type="Pfam" id="PF10152">
    <property type="entry name" value="CCDC53"/>
    <property type="match status" value="1"/>
</dbReference>
<proteinExistence type="inferred from homology"/>
<keyword id="KW-1185">Reference proteome</keyword>